<comment type="function">
    <text evidence="1">Catalyzes the NADPH-dependent rearrangement and reduction of 1-deoxy-D-xylulose-5-phosphate (DXP) to 2-C-methyl-D-erythritol 4-phosphate (MEP).</text>
</comment>
<comment type="catalytic activity">
    <reaction evidence="1">
        <text>2-C-methyl-D-erythritol 4-phosphate + NADP(+) = 1-deoxy-D-xylulose 5-phosphate + NADPH + H(+)</text>
        <dbReference type="Rhea" id="RHEA:13717"/>
        <dbReference type="ChEBI" id="CHEBI:15378"/>
        <dbReference type="ChEBI" id="CHEBI:57783"/>
        <dbReference type="ChEBI" id="CHEBI:57792"/>
        <dbReference type="ChEBI" id="CHEBI:58262"/>
        <dbReference type="ChEBI" id="CHEBI:58349"/>
        <dbReference type="EC" id="1.1.1.267"/>
    </reaction>
    <physiologicalReaction direction="right-to-left" evidence="1">
        <dbReference type="Rhea" id="RHEA:13719"/>
    </physiologicalReaction>
</comment>
<comment type="cofactor">
    <cofactor evidence="1">
        <name>Mg(2+)</name>
        <dbReference type="ChEBI" id="CHEBI:18420"/>
    </cofactor>
    <cofactor evidence="1">
        <name>Mn(2+)</name>
        <dbReference type="ChEBI" id="CHEBI:29035"/>
    </cofactor>
</comment>
<comment type="pathway">
    <text evidence="1">Isoprenoid biosynthesis; isopentenyl diphosphate biosynthesis via DXP pathway; isopentenyl diphosphate from 1-deoxy-D-xylulose 5-phosphate: step 1/6.</text>
</comment>
<comment type="subunit">
    <text evidence="1">Homodimer.</text>
</comment>
<comment type="similarity">
    <text evidence="1">Belongs to the DXR family.</text>
</comment>
<organism>
    <name type="scientific">Wigglesworthia glossinidia brevipalpis</name>
    <dbReference type="NCBI Taxonomy" id="36870"/>
    <lineage>
        <taxon>Bacteria</taxon>
        <taxon>Pseudomonadati</taxon>
        <taxon>Pseudomonadota</taxon>
        <taxon>Gammaproteobacteria</taxon>
        <taxon>Enterobacterales</taxon>
        <taxon>Erwiniaceae</taxon>
        <taxon>Wigglesworthia</taxon>
    </lineage>
</organism>
<reference key="1">
    <citation type="journal article" date="2002" name="Nat. Genet.">
        <title>Genome sequence of the endocellular obligate symbiont of tsetse flies, Wigglesworthia glossinidia.</title>
        <authorList>
            <person name="Akman L."/>
            <person name="Yamashita A."/>
            <person name="Watanabe H."/>
            <person name="Oshima K."/>
            <person name="Shiba T."/>
            <person name="Hattori M."/>
            <person name="Aksoy S."/>
        </authorList>
    </citation>
    <scope>NUCLEOTIDE SEQUENCE [LARGE SCALE GENOMIC DNA]</scope>
</reference>
<accession>Q8D2G6</accession>
<evidence type="ECO:0000255" key="1">
    <source>
        <dbReference type="HAMAP-Rule" id="MF_00183"/>
    </source>
</evidence>
<proteinExistence type="inferred from homology"/>
<dbReference type="EC" id="1.1.1.267" evidence="1"/>
<dbReference type="EMBL" id="BA000021">
    <property type="protein sequence ID" value="BAC24534.1"/>
    <property type="molecule type" value="Genomic_DNA"/>
</dbReference>
<dbReference type="SMR" id="Q8D2G6"/>
<dbReference type="STRING" id="36870.gene:10368888"/>
<dbReference type="KEGG" id="wbr:yaeM"/>
<dbReference type="eggNOG" id="COG0743">
    <property type="taxonomic scope" value="Bacteria"/>
</dbReference>
<dbReference type="HOGENOM" id="CLU_035714_0_1_6"/>
<dbReference type="OrthoDB" id="9806546at2"/>
<dbReference type="UniPathway" id="UPA00056">
    <property type="reaction ID" value="UER00092"/>
</dbReference>
<dbReference type="Proteomes" id="UP000000562">
    <property type="component" value="Chromosome"/>
</dbReference>
<dbReference type="GO" id="GO:0030604">
    <property type="term" value="F:1-deoxy-D-xylulose-5-phosphate reductoisomerase activity"/>
    <property type="evidence" value="ECO:0007669"/>
    <property type="project" value="UniProtKB-UniRule"/>
</dbReference>
<dbReference type="GO" id="GO:0030145">
    <property type="term" value="F:manganese ion binding"/>
    <property type="evidence" value="ECO:0007669"/>
    <property type="project" value="TreeGrafter"/>
</dbReference>
<dbReference type="GO" id="GO:0070402">
    <property type="term" value="F:NADPH binding"/>
    <property type="evidence" value="ECO:0007669"/>
    <property type="project" value="InterPro"/>
</dbReference>
<dbReference type="GO" id="GO:0051484">
    <property type="term" value="P:isopentenyl diphosphate biosynthetic process, methylerythritol 4-phosphate pathway involved in terpenoid biosynthetic process"/>
    <property type="evidence" value="ECO:0007669"/>
    <property type="project" value="TreeGrafter"/>
</dbReference>
<dbReference type="FunFam" id="1.10.1740.10:FF:000004">
    <property type="entry name" value="1-deoxy-D-xylulose 5-phosphate reductoisomerase"/>
    <property type="match status" value="1"/>
</dbReference>
<dbReference type="FunFam" id="3.40.50.720:FF:000045">
    <property type="entry name" value="1-deoxy-D-xylulose 5-phosphate reductoisomerase"/>
    <property type="match status" value="1"/>
</dbReference>
<dbReference type="Gene3D" id="1.10.1740.10">
    <property type="match status" value="1"/>
</dbReference>
<dbReference type="Gene3D" id="3.40.50.720">
    <property type="entry name" value="NAD(P)-binding Rossmann-like Domain"/>
    <property type="match status" value="1"/>
</dbReference>
<dbReference type="HAMAP" id="MF_00183">
    <property type="entry name" value="DXP_reductoisom"/>
    <property type="match status" value="1"/>
</dbReference>
<dbReference type="InterPro" id="IPR003821">
    <property type="entry name" value="DXP_reductoisomerase"/>
</dbReference>
<dbReference type="InterPro" id="IPR013644">
    <property type="entry name" value="DXP_reductoisomerase_C"/>
</dbReference>
<dbReference type="InterPro" id="IPR013512">
    <property type="entry name" value="DXP_reductoisomerase_N"/>
</dbReference>
<dbReference type="InterPro" id="IPR026877">
    <property type="entry name" value="DXPR_C"/>
</dbReference>
<dbReference type="InterPro" id="IPR036169">
    <property type="entry name" value="DXPR_C_sf"/>
</dbReference>
<dbReference type="InterPro" id="IPR036291">
    <property type="entry name" value="NAD(P)-bd_dom_sf"/>
</dbReference>
<dbReference type="NCBIfam" id="TIGR00243">
    <property type="entry name" value="Dxr"/>
    <property type="match status" value="1"/>
</dbReference>
<dbReference type="NCBIfam" id="NF003938">
    <property type="entry name" value="PRK05447.1-1"/>
    <property type="match status" value="1"/>
</dbReference>
<dbReference type="PANTHER" id="PTHR30525">
    <property type="entry name" value="1-DEOXY-D-XYLULOSE 5-PHOSPHATE REDUCTOISOMERASE"/>
    <property type="match status" value="1"/>
</dbReference>
<dbReference type="PANTHER" id="PTHR30525:SF0">
    <property type="entry name" value="1-DEOXY-D-XYLULOSE 5-PHOSPHATE REDUCTOISOMERASE, CHLOROPLASTIC"/>
    <property type="match status" value="1"/>
</dbReference>
<dbReference type="Pfam" id="PF08436">
    <property type="entry name" value="DXP_redisom_C"/>
    <property type="match status" value="1"/>
</dbReference>
<dbReference type="Pfam" id="PF02670">
    <property type="entry name" value="DXP_reductoisom"/>
    <property type="match status" value="1"/>
</dbReference>
<dbReference type="Pfam" id="PF13288">
    <property type="entry name" value="DXPR_C"/>
    <property type="match status" value="1"/>
</dbReference>
<dbReference type="PIRSF" id="PIRSF006205">
    <property type="entry name" value="Dxp_reductismrs"/>
    <property type="match status" value="1"/>
</dbReference>
<dbReference type="SUPFAM" id="SSF69055">
    <property type="entry name" value="1-deoxy-D-xylulose-5-phosphate reductoisomerase, C-terminal domain"/>
    <property type="match status" value="1"/>
</dbReference>
<dbReference type="SUPFAM" id="SSF55347">
    <property type="entry name" value="Glyceraldehyde-3-phosphate dehydrogenase-like, C-terminal domain"/>
    <property type="match status" value="1"/>
</dbReference>
<dbReference type="SUPFAM" id="SSF51735">
    <property type="entry name" value="NAD(P)-binding Rossmann-fold domains"/>
    <property type="match status" value="1"/>
</dbReference>
<protein>
    <recommendedName>
        <fullName evidence="1">1-deoxy-D-xylulose 5-phosphate reductoisomerase</fullName>
        <shortName evidence="1">DXP reductoisomerase</shortName>
        <ecNumber evidence="1">1.1.1.267</ecNumber>
    </recommendedName>
    <alternativeName>
        <fullName evidence="1">1-deoxyxylulose-5-phosphate reductoisomerase</fullName>
    </alternativeName>
    <alternativeName>
        <fullName evidence="1">2-C-methyl-D-erythritol 4-phosphate synthase</fullName>
    </alternativeName>
</protein>
<name>DXR_WIGBR</name>
<keyword id="KW-0414">Isoprene biosynthesis</keyword>
<keyword id="KW-0464">Manganese</keyword>
<keyword id="KW-0479">Metal-binding</keyword>
<keyword id="KW-0521">NADP</keyword>
<keyword id="KW-0560">Oxidoreductase</keyword>
<keyword id="KW-1185">Reference proteome</keyword>
<sequence length="397" mass="44664">MKKITILGSTGSIGKNTLKIISNNLDKFSVYSLVAYGNNINVLISQCIKYKPNYVCIMNKKKLLDLKQGLLKNKCKTSVLFGSNDICNLSSSKEVDIVISATVGLSGIFFLFSAIKSGKKILLANKEILVSCGHFFMKQVEKYKSIIIPIDSEHNAIFQSLPLDFQKKLGIASINKYGIYKLILTGSGGPFRNVELRDLKKVSPDQACNHPNWKMGKKISIDSATMMNKGFEYIVAKWLFNVCKDQIELIIHHQSIIHSMIRYIDGTVIANMSLPDMQSSISYGLGYPKRIKIKNKYLDFYKNNKLTFESIDYNRYPCLNLAIQASYNGQGATTVLNSANEISVSAFLSKKIYFTDIAIINKKVLDKLDIFEPSSIEEILLLDSKARNLAKKFIKCY</sequence>
<feature type="chain" id="PRO_0000163735" description="1-deoxy-D-xylulose 5-phosphate reductoisomerase">
    <location>
        <begin position="1"/>
        <end position="397"/>
    </location>
</feature>
<feature type="binding site" evidence="1">
    <location>
        <position position="10"/>
    </location>
    <ligand>
        <name>NADPH</name>
        <dbReference type="ChEBI" id="CHEBI:57783"/>
    </ligand>
</feature>
<feature type="binding site" evidence="1">
    <location>
        <position position="11"/>
    </location>
    <ligand>
        <name>NADPH</name>
        <dbReference type="ChEBI" id="CHEBI:57783"/>
    </ligand>
</feature>
<feature type="binding site" evidence="1">
    <location>
        <position position="12"/>
    </location>
    <ligand>
        <name>NADPH</name>
        <dbReference type="ChEBI" id="CHEBI:57783"/>
    </ligand>
</feature>
<feature type="binding site" evidence="1">
    <location>
        <position position="13"/>
    </location>
    <ligand>
        <name>NADPH</name>
        <dbReference type="ChEBI" id="CHEBI:57783"/>
    </ligand>
</feature>
<feature type="binding site" evidence="1">
    <location>
        <position position="39"/>
    </location>
    <ligand>
        <name>NADPH</name>
        <dbReference type="ChEBI" id="CHEBI:57783"/>
    </ligand>
</feature>
<feature type="binding site" evidence="1">
    <location>
        <position position="125"/>
    </location>
    <ligand>
        <name>NADPH</name>
        <dbReference type="ChEBI" id="CHEBI:57783"/>
    </ligand>
</feature>
<feature type="binding site" evidence="1">
    <location>
        <position position="126"/>
    </location>
    <ligand>
        <name>1-deoxy-D-xylulose 5-phosphate</name>
        <dbReference type="ChEBI" id="CHEBI:57792"/>
    </ligand>
</feature>
<feature type="binding site" evidence="1">
    <location>
        <position position="127"/>
    </location>
    <ligand>
        <name>NADPH</name>
        <dbReference type="ChEBI" id="CHEBI:57783"/>
    </ligand>
</feature>
<feature type="binding site" evidence="1">
    <location>
        <position position="151"/>
    </location>
    <ligand>
        <name>Mn(2+)</name>
        <dbReference type="ChEBI" id="CHEBI:29035"/>
    </ligand>
</feature>
<feature type="binding site" evidence="1">
    <location>
        <position position="152"/>
    </location>
    <ligand>
        <name>1-deoxy-D-xylulose 5-phosphate</name>
        <dbReference type="ChEBI" id="CHEBI:57792"/>
    </ligand>
</feature>
<feature type="binding site" evidence="1">
    <location>
        <position position="153"/>
    </location>
    <ligand>
        <name>1-deoxy-D-xylulose 5-phosphate</name>
        <dbReference type="ChEBI" id="CHEBI:57792"/>
    </ligand>
</feature>
<feature type="binding site" evidence="1">
    <location>
        <position position="153"/>
    </location>
    <ligand>
        <name>Mn(2+)</name>
        <dbReference type="ChEBI" id="CHEBI:29035"/>
    </ligand>
</feature>
<feature type="binding site" evidence="1">
    <location>
        <position position="187"/>
    </location>
    <ligand>
        <name>1-deoxy-D-xylulose 5-phosphate</name>
        <dbReference type="ChEBI" id="CHEBI:57792"/>
    </ligand>
</feature>
<feature type="binding site" evidence="1">
    <location>
        <position position="210"/>
    </location>
    <ligand>
        <name>1-deoxy-D-xylulose 5-phosphate</name>
        <dbReference type="ChEBI" id="CHEBI:57792"/>
    </ligand>
</feature>
<feature type="binding site" evidence="1">
    <location>
        <position position="216"/>
    </location>
    <ligand>
        <name>NADPH</name>
        <dbReference type="ChEBI" id="CHEBI:57783"/>
    </ligand>
</feature>
<feature type="binding site" evidence="1">
    <location>
        <position position="223"/>
    </location>
    <ligand>
        <name>1-deoxy-D-xylulose 5-phosphate</name>
        <dbReference type="ChEBI" id="CHEBI:57792"/>
    </ligand>
</feature>
<feature type="binding site" evidence="1">
    <location>
        <position position="228"/>
    </location>
    <ligand>
        <name>1-deoxy-D-xylulose 5-phosphate</name>
        <dbReference type="ChEBI" id="CHEBI:57792"/>
    </ligand>
</feature>
<feature type="binding site" evidence="1">
    <location>
        <position position="229"/>
    </location>
    <ligand>
        <name>1-deoxy-D-xylulose 5-phosphate</name>
        <dbReference type="ChEBI" id="CHEBI:57792"/>
    </ligand>
</feature>
<feature type="binding site" evidence="1">
    <location>
        <position position="232"/>
    </location>
    <ligand>
        <name>1-deoxy-D-xylulose 5-phosphate</name>
        <dbReference type="ChEBI" id="CHEBI:57792"/>
    </ligand>
</feature>
<feature type="binding site" evidence="1">
    <location>
        <position position="232"/>
    </location>
    <ligand>
        <name>Mn(2+)</name>
        <dbReference type="ChEBI" id="CHEBI:29035"/>
    </ligand>
</feature>
<gene>
    <name evidence="1" type="primary">dxr</name>
    <name type="ordered locus">WIGBR3880</name>
</gene>